<organism>
    <name type="scientific">Escherichia coli O157:H7</name>
    <dbReference type="NCBI Taxonomy" id="83334"/>
    <lineage>
        <taxon>Bacteria</taxon>
        <taxon>Pseudomonadati</taxon>
        <taxon>Pseudomonadota</taxon>
        <taxon>Gammaproteobacteria</taxon>
        <taxon>Enterobacterales</taxon>
        <taxon>Enterobacteriaceae</taxon>
        <taxon>Escherichia</taxon>
    </lineage>
</organism>
<feature type="chain" id="PRO_0000187524" description="Cyanate hydratase">
    <location>
        <begin position="1"/>
        <end position="156"/>
    </location>
</feature>
<feature type="active site" evidence="1">
    <location>
        <position position="96"/>
    </location>
</feature>
<feature type="active site" evidence="1">
    <location>
        <position position="99"/>
    </location>
</feature>
<feature type="active site" evidence="1">
    <location>
        <position position="122"/>
    </location>
</feature>
<accession>P58704</accession>
<reference key="1">
    <citation type="journal article" date="2001" name="Nature">
        <title>Genome sequence of enterohaemorrhagic Escherichia coli O157:H7.</title>
        <authorList>
            <person name="Perna N.T."/>
            <person name="Plunkett G. III"/>
            <person name="Burland V."/>
            <person name="Mau B."/>
            <person name="Glasner J.D."/>
            <person name="Rose D.J."/>
            <person name="Mayhew G.F."/>
            <person name="Evans P.S."/>
            <person name="Gregor J."/>
            <person name="Kirkpatrick H.A."/>
            <person name="Posfai G."/>
            <person name="Hackett J."/>
            <person name="Klink S."/>
            <person name="Boutin A."/>
            <person name="Shao Y."/>
            <person name="Miller L."/>
            <person name="Grotbeck E.J."/>
            <person name="Davis N.W."/>
            <person name="Lim A."/>
            <person name="Dimalanta E.T."/>
            <person name="Potamousis K."/>
            <person name="Apodaca J."/>
            <person name="Anantharaman T.S."/>
            <person name="Lin J."/>
            <person name="Yen G."/>
            <person name="Schwartz D.C."/>
            <person name="Welch R.A."/>
            <person name="Blattner F.R."/>
        </authorList>
    </citation>
    <scope>NUCLEOTIDE SEQUENCE [LARGE SCALE GENOMIC DNA]</scope>
    <source>
        <strain>O157:H7 / EDL933 / ATCC 700927 / EHEC</strain>
    </source>
</reference>
<reference key="2">
    <citation type="journal article" date="2001" name="DNA Res.">
        <title>Complete genome sequence of enterohemorrhagic Escherichia coli O157:H7 and genomic comparison with a laboratory strain K-12.</title>
        <authorList>
            <person name="Hayashi T."/>
            <person name="Makino K."/>
            <person name="Ohnishi M."/>
            <person name="Kurokawa K."/>
            <person name="Ishii K."/>
            <person name="Yokoyama K."/>
            <person name="Han C.-G."/>
            <person name="Ohtsubo E."/>
            <person name="Nakayama K."/>
            <person name="Murata T."/>
            <person name="Tanaka M."/>
            <person name="Tobe T."/>
            <person name="Iida T."/>
            <person name="Takami H."/>
            <person name="Honda T."/>
            <person name="Sasakawa C."/>
            <person name="Ogasawara N."/>
            <person name="Yasunaga T."/>
            <person name="Kuhara S."/>
            <person name="Shiba T."/>
            <person name="Hattori M."/>
            <person name="Shinagawa H."/>
        </authorList>
    </citation>
    <scope>NUCLEOTIDE SEQUENCE [LARGE SCALE GENOMIC DNA]</scope>
    <source>
        <strain>O157:H7 / Sakai / RIMD 0509952 / EHEC</strain>
    </source>
</reference>
<evidence type="ECO:0000250" key="1"/>
<evidence type="ECO:0000305" key="2"/>
<dbReference type="EC" id="4.2.1.104"/>
<dbReference type="EMBL" id="AE005174">
    <property type="protein sequence ID" value="AAG54689.1"/>
    <property type="molecule type" value="Genomic_DNA"/>
</dbReference>
<dbReference type="EMBL" id="BA000007">
    <property type="protein sequence ID" value="BAB33816.1"/>
    <property type="molecule type" value="Genomic_DNA"/>
</dbReference>
<dbReference type="PIR" id="A99678">
    <property type="entry name" value="A99678"/>
</dbReference>
<dbReference type="PIR" id="E85528">
    <property type="entry name" value="E85528"/>
</dbReference>
<dbReference type="RefSeq" id="NP_308420.1">
    <property type="nucleotide sequence ID" value="NC_002695.1"/>
</dbReference>
<dbReference type="RefSeq" id="WP_000616247.1">
    <property type="nucleotide sequence ID" value="NZ_VOAI01000005.1"/>
</dbReference>
<dbReference type="SMR" id="P58704"/>
<dbReference type="STRING" id="155864.Z0436"/>
<dbReference type="GeneID" id="75170316"/>
<dbReference type="GeneID" id="914495"/>
<dbReference type="KEGG" id="ece:Z0436"/>
<dbReference type="KEGG" id="ecs:ECs_0393"/>
<dbReference type="PATRIC" id="fig|386585.9.peg.488"/>
<dbReference type="eggNOG" id="COG1513">
    <property type="taxonomic scope" value="Bacteria"/>
</dbReference>
<dbReference type="HOGENOM" id="CLU_103452_1_1_6"/>
<dbReference type="OMA" id="YELVMIN"/>
<dbReference type="Proteomes" id="UP000000558">
    <property type="component" value="Chromosome"/>
</dbReference>
<dbReference type="Proteomes" id="UP000002519">
    <property type="component" value="Chromosome"/>
</dbReference>
<dbReference type="GO" id="GO:0008824">
    <property type="term" value="F:cyanate hydratase activity"/>
    <property type="evidence" value="ECO:0007669"/>
    <property type="project" value="UniProtKB-UniRule"/>
</dbReference>
<dbReference type="GO" id="GO:0003677">
    <property type="term" value="F:DNA binding"/>
    <property type="evidence" value="ECO:0007669"/>
    <property type="project" value="InterPro"/>
</dbReference>
<dbReference type="GO" id="GO:0009439">
    <property type="term" value="P:cyanate metabolic process"/>
    <property type="evidence" value="ECO:0007669"/>
    <property type="project" value="UniProtKB-UniRule"/>
</dbReference>
<dbReference type="CDD" id="cd00559">
    <property type="entry name" value="Cyanase_C"/>
    <property type="match status" value="1"/>
</dbReference>
<dbReference type="FunFam" id="3.30.1160.10:FF:000001">
    <property type="entry name" value="Cyanate hydratase"/>
    <property type="match status" value="1"/>
</dbReference>
<dbReference type="Gene3D" id="3.30.1160.10">
    <property type="entry name" value="Cyanate lyase, C-terminal domain"/>
    <property type="match status" value="1"/>
</dbReference>
<dbReference type="Gene3D" id="1.10.260.40">
    <property type="entry name" value="lambda repressor-like DNA-binding domains"/>
    <property type="match status" value="1"/>
</dbReference>
<dbReference type="HAMAP" id="MF_00535">
    <property type="entry name" value="Cyanate_hydrat"/>
    <property type="match status" value="1"/>
</dbReference>
<dbReference type="InterPro" id="IPR008076">
    <property type="entry name" value="Cyanase"/>
</dbReference>
<dbReference type="InterPro" id="IPR003712">
    <property type="entry name" value="Cyanate_lyase_C"/>
</dbReference>
<dbReference type="InterPro" id="IPR036581">
    <property type="entry name" value="Cyanate_lyase_C_sf"/>
</dbReference>
<dbReference type="InterPro" id="IPR048564">
    <property type="entry name" value="CYNS_N"/>
</dbReference>
<dbReference type="InterPro" id="IPR010982">
    <property type="entry name" value="Lambda_DNA-bd_dom_sf"/>
</dbReference>
<dbReference type="NCBIfam" id="TIGR00673">
    <property type="entry name" value="cynS"/>
    <property type="match status" value="1"/>
</dbReference>
<dbReference type="NCBIfam" id="NF002773">
    <property type="entry name" value="PRK02866.1"/>
    <property type="match status" value="1"/>
</dbReference>
<dbReference type="PANTHER" id="PTHR34186">
    <property type="entry name" value="CYANATE HYDRATASE"/>
    <property type="match status" value="1"/>
</dbReference>
<dbReference type="PANTHER" id="PTHR34186:SF2">
    <property type="entry name" value="CYANATE HYDRATASE"/>
    <property type="match status" value="1"/>
</dbReference>
<dbReference type="Pfam" id="PF02560">
    <property type="entry name" value="Cyanate_lyase"/>
    <property type="match status" value="1"/>
</dbReference>
<dbReference type="Pfam" id="PF21291">
    <property type="entry name" value="CYNS_N"/>
    <property type="match status" value="1"/>
</dbReference>
<dbReference type="PIRSF" id="PIRSF001263">
    <property type="entry name" value="Cyanate_hydratas"/>
    <property type="match status" value="1"/>
</dbReference>
<dbReference type="PRINTS" id="PR01693">
    <property type="entry name" value="CYANASE"/>
</dbReference>
<dbReference type="SMART" id="SM01116">
    <property type="entry name" value="Cyanate_lyase"/>
    <property type="match status" value="1"/>
</dbReference>
<dbReference type="SUPFAM" id="SSF55234">
    <property type="entry name" value="Cyanase C-terminal domain"/>
    <property type="match status" value="1"/>
</dbReference>
<dbReference type="SUPFAM" id="SSF47413">
    <property type="entry name" value="lambda repressor-like DNA-binding domains"/>
    <property type="match status" value="1"/>
</dbReference>
<protein>
    <recommendedName>
        <fullName>Cyanate hydratase</fullName>
        <shortName>Cyanase</shortName>
        <ecNumber>4.2.1.104</ecNumber>
    </recommendedName>
    <alternativeName>
        <fullName>Cyanate hydrolase</fullName>
    </alternativeName>
    <alternativeName>
        <fullName>Cyanate lyase</fullName>
    </alternativeName>
</protein>
<name>CYNS_ECO57</name>
<sequence>MIQSQINRNIRLDLADAILLSKAKKDLSFAEIADGTGLAEAFVTAALLGQQALPADAARQVGAKLDLDEDAILLLQMIPLRGCIDDRIPTDPTMYRFYEMLQVYGTTLKALVHEKFGDGIISAINFKLDVKKVADPEGGERAVITLDGKYLPTKPF</sequence>
<keyword id="KW-0456">Lyase</keyword>
<keyword id="KW-1185">Reference proteome</keyword>
<proteinExistence type="inferred from homology"/>
<comment type="function">
    <text evidence="1">Catalyzes the reaction of cyanate with bicarbonate to produce ammonia and carbon dioxide.</text>
</comment>
<comment type="catalytic activity">
    <reaction>
        <text>cyanate + hydrogencarbonate + 3 H(+) = NH4(+) + 2 CO2</text>
        <dbReference type="Rhea" id="RHEA:11120"/>
        <dbReference type="ChEBI" id="CHEBI:15378"/>
        <dbReference type="ChEBI" id="CHEBI:16526"/>
        <dbReference type="ChEBI" id="CHEBI:17544"/>
        <dbReference type="ChEBI" id="CHEBI:28938"/>
        <dbReference type="ChEBI" id="CHEBI:29195"/>
        <dbReference type="EC" id="4.2.1.104"/>
    </reaction>
</comment>
<comment type="subunit">
    <text evidence="1">Homodecamer composed of five homodimers.</text>
</comment>
<comment type="similarity">
    <text evidence="2">Belongs to the cyanase family.</text>
</comment>
<gene>
    <name type="primary">cynS</name>
    <name type="synonym">cnt</name>
    <name type="ordered locus">Z0436</name>
    <name type="ordered locus">ECs0393</name>
</gene>